<reference key="1">
    <citation type="journal article" date="2008" name="Environ. Microbiol.">
        <title>The genome of Erwinia tasmaniensis strain Et1/99, a non-pathogenic bacterium in the genus Erwinia.</title>
        <authorList>
            <person name="Kube M."/>
            <person name="Migdoll A.M."/>
            <person name="Mueller I."/>
            <person name="Kuhl H."/>
            <person name="Beck A."/>
            <person name="Reinhardt R."/>
            <person name="Geider K."/>
        </authorList>
    </citation>
    <scope>NUCLEOTIDE SEQUENCE [LARGE SCALE GENOMIC DNA]</scope>
    <source>
        <strain>DSM 17950 / CFBP 7177 / CIP 109463 / NCPPB 4357 / Et1/99</strain>
    </source>
</reference>
<gene>
    <name evidence="1" type="primary">minC</name>
    <name type="ordered locus">ETA_15370</name>
</gene>
<evidence type="ECO:0000255" key="1">
    <source>
        <dbReference type="HAMAP-Rule" id="MF_00267"/>
    </source>
</evidence>
<keyword id="KW-0131">Cell cycle</keyword>
<keyword id="KW-0132">Cell division</keyword>
<keyword id="KW-1185">Reference proteome</keyword>
<keyword id="KW-0717">Septation</keyword>
<name>MINC_ERWT9</name>
<organism>
    <name type="scientific">Erwinia tasmaniensis (strain DSM 17950 / CFBP 7177 / CIP 109463 / NCPPB 4357 / Et1/99)</name>
    <dbReference type="NCBI Taxonomy" id="465817"/>
    <lineage>
        <taxon>Bacteria</taxon>
        <taxon>Pseudomonadati</taxon>
        <taxon>Pseudomonadota</taxon>
        <taxon>Gammaproteobacteria</taxon>
        <taxon>Enterobacterales</taxon>
        <taxon>Erwiniaceae</taxon>
        <taxon>Erwinia</taxon>
    </lineage>
</organism>
<proteinExistence type="inferred from homology"/>
<sequence>MSQSPIELKGSSFTLSVIHLHHTDPAIVRNALEEKVSQAPAFLKNAPVVINVAALSREINWRQMQQAILATGLHIVGVSGCKDERLKQTIARSGLPVLNEGKEQKNSADTPPIAALPVQTTAKTRLISTPVRSGQQIYAKDCDLIITSSVSAGAELIADGNIHIYGMMRGRALAGANGDKNCQIFCTSLSAELVSIAGNYWIMDQIPAEFFGKASRLCLQDGALTIQALN</sequence>
<comment type="function">
    <text evidence="1">Cell division inhibitor that blocks the formation of polar Z ring septums. Rapidly oscillates between the poles of the cell to destabilize FtsZ filaments that have formed before they mature into polar Z rings. Prevents FtsZ polymerization.</text>
</comment>
<comment type="subunit">
    <text evidence="1">Interacts with MinD and FtsZ.</text>
</comment>
<comment type="similarity">
    <text evidence="1">Belongs to the MinC family.</text>
</comment>
<accession>B2VJ44</accession>
<protein>
    <recommendedName>
        <fullName evidence="1">Probable septum site-determining protein MinC</fullName>
    </recommendedName>
</protein>
<dbReference type="EMBL" id="CU468135">
    <property type="protein sequence ID" value="CAO96583.1"/>
    <property type="molecule type" value="Genomic_DNA"/>
</dbReference>
<dbReference type="RefSeq" id="WP_012441276.1">
    <property type="nucleotide sequence ID" value="NC_010694.1"/>
</dbReference>
<dbReference type="SMR" id="B2VJ44"/>
<dbReference type="STRING" id="465817.ETA_15370"/>
<dbReference type="KEGG" id="eta:ETA_15370"/>
<dbReference type="eggNOG" id="COG0850">
    <property type="taxonomic scope" value="Bacteria"/>
</dbReference>
<dbReference type="HOGENOM" id="CLU_067812_0_1_6"/>
<dbReference type="OrthoDB" id="9794530at2"/>
<dbReference type="Proteomes" id="UP000001726">
    <property type="component" value="Chromosome"/>
</dbReference>
<dbReference type="GO" id="GO:0000902">
    <property type="term" value="P:cell morphogenesis"/>
    <property type="evidence" value="ECO:0007669"/>
    <property type="project" value="InterPro"/>
</dbReference>
<dbReference type="GO" id="GO:0000917">
    <property type="term" value="P:division septum assembly"/>
    <property type="evidence" value="ECO:0007669"/>
    <property type="project" value="UniProtKB-KW"/>
</dbReference>
<dbReference type="GO" id="GO:0051302">
    <property type="term" value="P:regulation of cell division"/>
    <property type="evidence" value="ECO:0007669"/>
    <property type="project" value="InterPro"/>
</dbReference>
<dbReference type="GO" id="GO:1901891">
    <property type="term" value="P:regulation of cell septum assembly"/>
    <property type="evidence" value="ECO:0007669"/>
    <property type="project" value="InterPro"/>
</dbReference>
<dbReference type="FunFam" id="2.160.20.70:FF:000002">
    <property type="entry name" value="Probable septum site-determining protein MinC"/>
    <property type="match status" value="1"/>
</dbReference>
<dbReference type="Gene3D" id="2.160.20.70">
    <property type="match status" value="1"/>
</dbReference>
<dbReference type="Gene3D" id="3.30.70.260">
    <property type="match status" value="1"/>
</dbReference>
<dbReference type="HAMAP" id="MF_00267">
    <property type="entry name" value="MinC"/>
    <property type="match status" value="1"/>
</dbReference>
<dbReference type="InterPro" id="IPR016098">
    <property type="entry name" value="CAP/MinC_C"/>
</dbReference>
<dbReference type="InterPro" id="IPR013033">
    <property type="entry name" value="MinC"/>
</dbReference>
<dbReference type="InterPro" id="IPR036145">
    <property type="entry name" value="MinC_C_sf"/>
</dbReference>
<dbReference type="InterPro" id="IPR007874">
    <property type="entry name" value="MinC_N"/>
</dbReference>
<dbReference type="InterPro" id="IPR005526">
    <property type="entry name" value="Septum_form_inhib_MinC_C"/>
</dbReference>
<dbReference type="NCBIfam" id="TIGR01222">
    <property type="entry name" value="minC"/>
    <property type="match status" value="1"/>
</dbReference>
<dbReference type="PANTHER" id="PTHR34108">
    <property type="entry name" value="SEPTUM SITE-DETERMINING PROTEIN MINC"/>
    <property type="match status" value="1"/>
</dbReference>
<dbReference type="PANTHER" id="PTHR34108:SF1">
    <property type="entry name" value="SEPTUM SITE-DETERMINING PROTEIN MINC"/>
    <property type="match status" value="1"/>
</dbReference>
<dbReference type="Pfam" id="PF03775">
    <property type="entry name" value="MinC_C"/>
    <property type="match status" value="1"/>
</dbReference>
<dbReference type="Pfam" id="PF05209">
    <property type="entry name" value="MinC_N"/>
    <property type="match status" value="1"/>
</dbReference>
<dbReference type="SUPFAM" id="SSF63848">
    <property type="entry name" value="Cell-division inhibitor MinC, C-terminal domain"/>
    <property type="match status" value="1"/>
</dbReference>
<feature type="chain" id="PRO_1000114280" description="Probable septum site-determining protein MinC">
    <location>
        <begin position="1"/>
        <end position="230"/>
    </location>
</feature>